<organism>
    <name type="scientific">Streptococcus pneumoniae (strain Hungary19A-6)</name>
    <dbReference type="NCBI Taxonomy" id="487214"/>
    <lineage>
        <taxon>Bacteria</taxon>
        <taxon>Bacillati</taxon>
        <taxon>Bacillota</taxon>
        <taxon>Bacilli</taxon>
        <taxon>Lactobacillales</taxon>
        <taxon>Streptococcaceae</taxon>
        <taxon>Streptococcus</taxon>
    </lineage>
</organism>
<reference key="1">
    <citation type="journal article" date="2010" name="Genome Biol.">
        <title>Structure and dynamics of the pan-genome of Streptococcus pneumoniae and closely related species.</title>
        <authorList>
            <person name="Donati C."/>
            <person name="Hiller N.L."/>
            <person name="Tettelin H."/>
            <person name="Muzzi A."/>
            <person name="Croucher N.J."/>
            <person name="Angiuoli S.V."/>
            <person name="Oggioni M."/>
            <person name="Dunning Hotopp J.C."/>
            <person name="Hu F.Z."/>
            <person name="Riley D.R."/>
            <person name="Covacci A."/>
            <person name="Mitchell T.J."/>
            <person name="Bentley S.D."/>
            <person name="Kilian M."/>
            <person name="Ehrlich G.D."/>
            <person name="Rappuoli R."/>
            <person name="Moxon E.R."/>
            <person name="Masignani V."/>
        </authorList>
    </citation>
    <scope>NUCLEOTIDE SEQUENCE [LARGE SCALE GENOMIC DNA]</scope>
    <source>
        <strain>Hungary19A-6</strain>
    </source>
</reference>
<protein>
    <recommendedName>
        <fullName evidence="1">tRNA N6-adenosine threonylcarbamoyltransferase</fullName>
        <ecNumber evidence="1">2.3.1.234</ecNumber>
    </recommendedName>
    <alternativeName>
        <fullName evidence="1">N6-L-threonylcarbamoyladenine synthase</fullName>
        <shortName evidence="1">t(6)A synthase</shortName>
    </alternativeName>
    <alternativeName>
        <fullName evidence="1">t(6)A37 threonylcarbamoyladenosine biosynthesis protein TsaD</fullName>
    </alternativeName>
    <alternativeName>
        <fullName evidence="1">tRNA threonylcarbamoyladenosine biosynthesis protein TsaD</fullName>
    </alternativeName>
</protein>
<keyword id="KW-0012">Acyltransferase</keyword>
<keyword id="KW-0963">Cytoplasm</keyword>
<keyword id="KW-0408">Iron</keyword>
<keyword id="KW-0479">Metal-binding</keyword>
<keyword id="KW-0808">Transferase</keyword>
<keyword id="KW-0819">tRNA processing</keyword>
<proteinExistence type="inferred from homology"/>
<sequence>MKDRYILAFETSCDETSVAVLKNDDELLSNVIASQIESHKRFGGVVPEVASRHHVEVITACIEEALAEAGITEEDVTAVAVTYGPGLVGALLVGLSAAKTFAWAHGLPLIPVNHMAGHLMAAQSVEPLEFPLLALLVSGGHTELVYVSEAGDYKIVGETRDDAVGEAYDKVGRVMGLTYPAGREIDELAHQGQDIYDFPRAMIKEDNLEFSFSGLKSAFINLHHNAEQKGESLSTEDLCASFQAAVMDILMAKTKKALEEYPVKTLVVAGGVAANKGLRERLAAEITDVKVIIPPLRLCGDNAGMIAYASVSEWNKENFAGWDLNAKPSLAFDTME</sequence>
<comment type="function">
    <text evidence="1">Required for the formation of a threonylcarbamoyl group on adenosine at position 37 (t(6)A37) in tRNAs that read codons beginning with adenine. Is involved in the transfer of the threonylcarbamoyl moiety of threonylcarbamoyl-AMP (TC-AMP) to the N6 group of A37, together with TsaE and TsaB. TsaD likely plays a direct catalytic role in this reaction.</text>
</comment>
<comment type="catalytic activity">
    <reaction evidence="1">
        <text>L-threonylcarbamoyladenylate + adenosine(37) in tRNA = N(6)-L-threonylcarbamoyladenosine(37) in tRNA + AMP + H(+)</text>
        <dbReference type="Rhea" id="RHEA:37059"/>
        <dbReference type="Rhea" id="RHEA-COMP:10162"/>
        <dbReference type="Rhea" id="RHEA-COMP:10163"/>
        <dbReference type="ChEBI" id="CHEBI:15378"/>
        <dbReference type="ChEBI" id="CHEBI:73682"/>
        <dbReference type="ChEBI" id="CHEBI:74411"/>
        <dbReference type="ChEBI" id="CHEBI:74418"/>
        <dbReference type="ChEBI" id="CHEBI:456215"/>
        <dbReference type="EC" id="2.3.1.234"/>
    </reaction>
</comment>
<comment type="cofactor">
    <cofactor evidence="1">
        <name>Fe(2+)</name>
        <dbReference type="ChEBI" id="CHEBI:29033"/>
    </cofactor>
    <text evidence="1">Binds 1 Fe(2+) ion per subunit.</text>
</comment>
<comment type="subcellular location">
    <subcellularLocation>
        <location evidence="1">Cytoplasm</location>
    </subcellularLocation>
</comment>
<comment type="similarity">
    <text evidence="1">Belongs to the KAE1 / TsaD family.</text>
</comment>
<gene>
    <name evidence="1" type="primary">tsaD</name>
    <name type="synonym">gcp</name>
    <name type="ordered locus">SPH_0244</name>
</gene>
<name>TSAD_STRPI</name>
<feature type="chain" id="PRO_1000146029" description="tRNA N6-adenosine threonylcarbamoyltransferase">
    <location>
        <begin position="1"/>
        <end position="336"/>
    </location>
</feature>
<feature type="binding site" evidence="1">
    <location>
        <position position="114"/>
    </location>
    <ligand>
        <name>Fe cation</name>
        <dbReference type="ChEBI" id="CHEBI:24875"/>
    </ligand>
</feature>
<feature type="binding site" evidence="1">
    <location>
        <position position="118"/>
    </location>
    <ligand>
        <name>Fe cation</name>
        <dbReference type="ChEBI" id="CHEBI:24875"/>
    </ligand>
</feature>
<feature type="binding site" evidence="1">
    <location>
        <begin position="136"/>
        <end position="140"/>
    </location>
    <ligand>
        <name>substrate</name>
    </ligand>
</feature>
<feature type="binding site" evidence="1">
    <location>
        <position position="169"/>
    </location>
    <ligand>
        <name>substrate</name>
    </ligand>
</feature>
<feature type="binding site" evidence="1">
    <location>
        <position position="182"/>
    </location>
    <ligand>
        <name>substrate</name>
    </ligand>
</feature>
<feature type="binding site" evidence="1">
    <location>
        <position position="186"/>
    </location>
    <ligand>
        <name>substrate</name>
    </ligand>
</feature>
<feature type="binding site" evidence="1">
    <location>
        <position position="275"/>
    </location>
    <ligand>
        <name>substrate</name>
    </ligand>
</feature>
<feature type="binding site" evidence="1">
    <location>
        <position position="301"/>
    </location>
    <ligand>
        <name>Fe cation</name>
        <dbReference type="ChEBI" id="CHEBI:24875"/>
    </ligand>
</feature>
<evidence type="ECO:0000255" key="1">
    <source>
        <dbReference type="HAMAP-Rule" id="MF_01445"/>
    </source>
</evidence>
<dbReference type="EC" id="2.3.1.234" evidence="1"/>
<dbReference type="EMBL" id="CP000936">
    <property type="protein sequence ID" value="ACA35590.1"/>
    <property type="molecule type" value="Genomic_DNA"/>
</dbReference>
<dbReference type="RefSeq" id="WP_000655066.1">
    <property type="nucleotide sequence ID" value="NC_010380.1"/>
</dbReference>
<dbReference type="SMR" id="B1I843"/>
<dbReference type="KEGG" id="spv:SPH_0244"/>
<dbReference type="HOGENOM" id="CLU_023208_0_2_9"/>
<dbReference type="Proteomes" id="UP000002163">
    <property type="component" value="Chromosome"/>
</dbReference>
<dbReference type="GO" id="GO:0005737">
    <property type="term" value="C:cytoplasm"/>
    <property type="evidence" value="ECO:0007669"/>
    <property type="project" value="UniProtKB-SubCell"/>
</dbReference>
<dbReference type="GO" id="GO:0005506">
    <property type="term" value="F:iron ion binding"/>
    <property type="evidence" value="ECO:0007669"/>
    <property type="project" value="UniProtKB-UniRule"/>
</dbReference>
<dbReference type="GO" id="GO:0061711">
    <property type="term" value="F:N(6)-L-threonylcarbamoyladenine synthase activity"/>
    <property type="evidence" value="ECO:0007669"/>
    <property type="project" value="UniProtKB-EC"/>
</dbReference>
<dbReference type="GO" id="GO:0002949">
    <property type="term" value="P:tRNA threonylcarbamoyladenosine modification"/>
    <property type="evidence" value="ECO:0007669"/>
    <property type="project" value="UniProtKB-UniRule"/>
</dbReference>
<dbReference type="CDD" id="cd24133">
    <property type="entry name" value="ASKHA_NBD_TsaD_bac"/>
    <property type="match status" value="1"/>
</dbReference>
<dbReference type="FunFam" id="3.30.420.40:FF:000012">
    <property type="entry name" value="tRNA N6-adenosine threonylcarbamoyltransferase"/>
    <property type="match status" value="1"/>
</dbReference>
<dbReference type="FunFam" id="3.30.420.40:FF:000040">
    <property type="entry name" value="tRNA N6-adenosine threonylcarbamoyltransferase"/>
    <property type="match status" value="1"/>
</dbReference>
<dbReference type="Gene3D" id="3.30.420.40">
    <property type="match status" value="2"/>
</dbReference>
<dbReference type="HAMAP" id="MF_01445">
    <property type="entry name" value="TsaD"/>
    <property type="match status" value="1"/>
</dbReference>
<dbReference type="InterPro" id="IPR043129">
    <property type="entry name" value="ATPase_NBD"/>
</dbReference>
<dbReference type="InterPro" id="IPR000905">
    <property type="entry name" value="Gcp-like_dom"/>
</dbReference>
<dbReference type="InterPro" id="IPR017861">
    <property type="entry name" value="KAE1/TsaD"/>
</dbReference>
<dbReference type="InterPro" id="IPR017860">
    <property type="entry name" value="Peptidase_M22_CS"/>
</dbReference>
<dbReference type="InterPro" id="IPR022450">
    <property type="entry name" value="TsaD"/>
</dbReference>
<dbReference type="NCBIfam" id="TIGR00329">
    <property type="entry name" value="gcp_kae1"/>
    <property type="match status" value="1"/>
</dbReference>
<dbReference type="NCBIfam" id="TIGR03723">
    <property type="entry name" value="T6A_TsaD_YgjD"/>
    <property type="match status" value="1"/>
</dbReference>
<dbReference type="PANTHER" id="PTHR11735">
    <property type="entry name" value="TRNA N6-ADENOSINE THREONYLCARBAMOYLTRANSFERASE"/>
    <property type="match status" value="1"/>
</dbReference>
<dbReference type="PANTHER" id="PTHR11735:SF6">
    <property type="entry name" value="TRNA N6-ADENOSINE THREONYLCARBAMOYLTRANSFERASE, MITOCHONDRIAL"/>
    <property type="match status" value="1"/>
</dbReference>
<dbReference type="Pfam" id="PF00814">
    <property type="entry name" value="TsaD"/>
    <property type="match status" value="1"/>
</dbReference>
<dbReference type="PRINTS" id="PR00789">
    <property type="entry name" value="OSIALOPTASE"/>
</dbReference>
<dbReference type="SUPFAM" id="SSF53067">
    <property type="entry name" value="Actin-like ATPase domain"/>
    <property type="match status" value="1"/>
</dbReference>
<dbReference type="PROSITE" id="PS01016">
    <property type="entry name" value="GLYCOPROTEASE"/>
    <property type="match status" value="1"/>
</dbReference>
<accession>B1I843</accession>